<sequence length="204" mass="22188">MIGRLRGIILEKQPPLVLLETNGVGYEVQLPMTCFYELPELGQEAIIFTQFVVREDAQLLYGFNNKQERALFRELIKVNGVGPKLALAILSGMSAQQFVGAVEREDITTLVKLPGVGKKTAERLVVEMKDRFKGLNGDLFNNTGDISLPTASPQTSDADIEAEAASALVALGYKPQEASRLVSKIAKPGADCETLIRDALRAAL</sequence>
<protein>
    <recommendedName>
        <fullName evidence="1">Holliday junction branch migration complex subunit RuvA</fullName>
    </recommendedName>
</protein>
<proteinExistence type="inferred from homology"/>
<gene>
    <name evidence="1" type="primary">ruvA</name>
    <name type="ordered locus">YPO2057</name>
    <name type="ordered locus">y2253</name>
    <name type="ordered locus">YP_1900</name>
</gene>
<organism>
    <name type="scientific">Yersinia pestis</name>
    <dbReference type="NCBI Taxonomy" id="632"/>
    <lineage>
        <taxon>Bacteria</taxon>
        <taxon>Pseudomonadati</taxon>
        <taxon>Pseudomonadota</taxon>
        <taxon>Gammaproteobacteria</taxon>
        <taxon>Enterobacterales</taxon>
        <taxon>Yersiniaceae</taxon>
        <taxon>Yersinia</taxon>
    </lineage>
</organism>
<accession>Q8ZEU6</accession>
<accession>Q0WF99</accession>
<dbReference type="EMBL" id="AL590842">
    <property type="protein sequence ID" value="CAL20692.1"/>
    <property type="molecule type" value="Genomic_DNA"/>
</dbReference>
<dbReference type="EMBL" id="AE009952">
    <property type="protein sequence ID" value="AAM85813.1"/>
    <property type="status" value="ALT_INIT"/>
    <property type="molecule type" value="Genomic_DNA"/>
</dbReference>
<dbReference type="EMBL" id="AE017042">
    <property type="protein sequence ID" value="AAS62118.1"/>
    <property type="status" value="ALT_INIT"/>
    <property type="molecule type" value="Genomic_DNA"/>
</dbReference>
<dbReference type="PIR" id="AI0250">
    <property type="entry name" value="AI0250"/>
</dbReference>
<dbReference type="RefSeq" id="WP_002211199.1">
    <property type="nucleotide sequence ID" value="NZ_WUCM01000062.1"/>
</dbReference>
<dbReference type="RefSeq" id="YP_002347039.1">
    <property type="nucleotide sequence ID" value="NC_003143.1"/>
</dbReference>
<dbReference type="SMR" id="Q8ZEU6"/>
<dbReference type="STRING" id="214092.YPO2057"/>
<dbReference type="PaxDb" id="214092-YPO2057"/>
<dbReference type="EnsemblBacteria" id="AAS62118">
    <property type="protein sequence ID" value="AAS62118"/>
    <property type="gene ID" value="YP_1900"/>
</dbReference>
<dbReference type="GeneID" id="57976604"/>
<dbReference type="KEGG" id="ype:YPO2057"/>
<dbReference type="KEGG" id="ypk:y2253"/>
<dbReference type="KEGG" id="ypm:YP_1900"/>
<dbReference type="PATRIC" id="fig|214092.21.peg.2445"/>
<dbReference type="eggNOG" id="COG0632">
    <property type="taxonomic scope" value="Bacteria"/>
</dbReference>
<dbReference type="HOGENOM" id="CLU_087936_0_0_6"/>
<dbReference type="OMA" id="ECAGVGY"/>
<dbReference type="OrthoDB" id="5293449at2"/>
<dbReference type="Proteomes" id="UP000000815">
    <property type="component" value="Chromosome"/>
</dbReference>
<dbReference type="Proteomes" id="UP000001019">
    <property type="component" value="Chromosome"/>
</dbReference>
<dbReference type="Proteomes" id="UP000002490">
    <property type="component" value="Chromosome"/>
</dbReference>
<dbReference type="GO" id="GO:0005737">
    <property type="term" value="C:cytoplasm"/>
    <property type="evidence" value="ECO:0007669"/>
    <property type="project" value="UniProtKB-SubCell"/>
</dbReference>
<dbReference type="GO" id="GO:0009379">
    <property type="term" value="C:Holliday junction helicase complex"/>
    <property type="evidence" value="ECO:0007669"/>
    <property type="project" value="InterPro"/>
</dbReference>
<dbReference type="GO" id="GO:0048476">
    <property type="term" value="C:Holliday junction resolvase complex"/>
    <property type="evidence" value="ECO:0007669"/>
    <property type="project" value="UniProtKB-UniRule"/>
</dbReference>
<dbReference type="GO" id="GO:0005524">
    <property type="term" value="F:ATP binding"/>
    <property type="evidence" value="ECO:0007669"/>
    <property type="project" value="InterPro"/>
</dbReference>
<dbReference type="GO" id="GO:0000400">
    <property type="term" value="F:four-way junction DNA binding"/>
    <property type="evidence" value="ECO:0007669"/>
    <property type="project" value="UniProtKB-UniRule"/>
</dbReference>
<dbReference type="GO" id="GO:0009378">
    <property type="term" value="F:four-way junction helicase activity"/>
    <property type="evidence" value="ECO:0000318"/>
    <property type="project" value="GO_Central"/>
</dbReference>
<dbReference type="GO" id="GO:0006310">
    <property type="term" value="P:DNA recombination"/>
    <property type="evidence" value="ECO:0007669"/>
    <property type="project" value="UniProtKB-UniRule"/>
</dbReference>
<dbReference type="GO" id="GO:0006281">
    <property type="term" value="P:DNA repair"/>
    <property type="evidence" value="ECO:0007669"/>
    <property type="project" value="UniProtKB-UniRule"/>
</dbReference>
<dbReference type="GO" id="GO:0009432">
    <property type="term" value="P:SOS response"/>
    <property type="evidence" value="ECO:0000318"/>
    <property type="project" value="GO_Central"/>
</dbReference>
<dbReference type="CDD" id="cd14332">
    <property type="entry name" value="UBA_RuvA_C"/>
    <property type="match status" value="1"/>
</dbReference>
<dbReference type="FunFam" id="1.10.150.20:FF:000012">
    <property type="entry name" value="Holliday junction ATP-dependent DNA helicase RuvA"/>
    <property type="match status" value="1"/>
</dbReference>
<dbReference type="FunFam" id="2.40.50.140:FF:000083">
    <property type="entry name" value="Holliday junction ATP-dependent DNA helicase RuvA"/>
    <property type="match status" value="1"/>
</dbReference>
<dbReference type="Gene3D" id="1.10.150.20">
    <property type="entry name" value="5' to 3' exonuclease, C-terminal subdomain"/>
    <property type="match status" value="1"/>
</dbReference>
<dbReference type="Gene3D" id="1.10.8.10">
    <property type="entry name" value="DNA helicase RuvA subunit, C-terminal domain"/>
    <property type="match status" value="1"/>
</dbReference>
<dbReference type="Gene3D" id="2.40.50.140">
    <property type="entry name" value="Nucleic acid-binding proteins"/>
    <property type="match status" value="1"/>
</dbReference>
<dbReference type="HAMAP" id="MF_00031">
    <property type="entry name" value="DNA_HJ_migration_RuvA"/>
    <property type="match status" value="1"/>
</dbReference>
<dbReference type="InterPro" id="IPR013849">
    <property type="entry name" value="DNA_helicase_Holl-junc_RuvA_I"/>
</dbReference>
<dbReference type="InterPro" id="IPR003583">
    <property type="entry name" value="Hlx-hairpin-Hlx_DNA-bd_motif"/>
</dbReference>
<dbReference type="InterPro" id="IPR012340">
    <property type="entry name" value="NA-bd_OB-fold"/>
</dbReference>
<dbReference type="InterPro" id="IPR000085">
    <property type="entry name" value="RuvA"/>
</dbReference>
<dbReference type="InterPro" id="IPR010994">
    <property type="entry name" value="RuvA_2-like"/>
</dbReference>
<dbReference type="InterPro" id="IPR011114">
    <property type="entry name" value="RuvA_C"/>
</dbReference>
<dbReference type="InterPro" id="IPR036267">
    <property type="entry name" value="RuvA_C_sf"/>
</dbReference>
<dbReference type="NCBIfam" id="TIGR00084">
    <property type="entry name" value="ruvA"/>
    <property type="match status" value="1"/>
</dbReference>
<dbReference type="Pfam" id="PF14520">
    <property type="entry name" value="HHH_5"/>
    <property type="match status" value="1"/>
</dbReference>
<dbReference type="Pfam" id="PF07499">
    <property type="entry name" value="RuvA_C"/>
    <property type="match status" value="1"/>
</dbReference>
<dbReference type="Pfam" id="PF01330">
    <property type="entry name" value="RuvA_N"/>
    <property type="match status" value="1"/>
</dbReference>
<dbReference type="SMART" id="SM00278">
    <property type="entry name" value="HhH1"/>
    <property type="match status" value="2"/>
</dbReference>
<dbReference type="SUPFAM" id="SSF46929">
    <property type="entry name" value="DNA helicase RuvA subunit, C-terminal domain"/>
    <property type="match status" value="1"/>
</dbReference>
<dbReference type="SUPFAM" id="SSF50249">
    <property type="entry name" value="Nucleic acid-binding proteins"/>
    <property type="match status" value="1"/>
</dbReference>
<dbReference type="SUPFAM" id="SSF47781">
    <property type="entry name" value="RuvA domain 2-like"/>
    <property type="match status" value="1"/>
</dbReference>
<reference key="1">
    <citation type="journal article" date="2001" name="Nature">
        <title>Genome sequence of Yersinia pestis, the causative agent of plague.</title>
        <authorList>
            <person name="Parkhill J."/>
            <person name="Wren B.W."/>
            <person name="Thomson N.R."/>
            <person name="Titball R.W."/>
            <person name="Holden M.T.G."/>
            <person name="Prentice M.B."/>
            <person name="Sebaihia M."/>
            <person name="James K.D."/>
            <person name="Churcher C.M."/>
            <person name="Mungall K.L."/>
            <person name="Baker S."/>
            <person name="Basham D."/>
            <person name="Bentley S.D."/>
            <person name="Brooks K."/>
            <person name="Cerdeno-Tarraga A.-M."/>
            <person name="Chillingworth T."/>
            <person name="Cronin A."/>
            <person name="Davies R.M."/>
            <person name="Davis P."/>
            <person name="Dougan G."/>
            <person name="Feltwell T."/>
            <person name="Hamlin N."/>
            <person name="Holroyd S."/>
            <person name="Jagels K."/>
            <person name="Karlyshev A.V."/>
            <person name="Leather S."/>
            <person name="Moule S."/>
            <person name="Oyston P.C.F."/>
            <person name="Quail M.A."/>
            <person name="Rutherford K.M."/>
            <person name="Simmonds M."/>
            <person name="Skelton J."/>
            <person name="Stevens K."/>
            <person name="Whitehead S."/>
            <person name="Barrell B.G."/>
        </authorList>
    </citation>
    <scope>NUCLEOTIDE SEQUENCE [LARGE SCALE GENOMIC DNA]</scope>
    <source>
        <strain>CO-92 / Biovar Orientalis</strain>
    </source>
</reference>
<reference key="2">
    <citation type="journal article" date="2002" name="J. Bacteriol.">
        <title>Genome sequence of Yersinia pestis KIM.</title>
        <authorList>
            <person name="Deng W."/>
            <person name="Burland V."/>
            <person name="Plunkett G. III"/>
            <person name="Boutin A."/>
            <person name="Mayhew G.F."/>
            <person name="Liss P."/>
            <person name="Perna N.T."/>
            <person name="Rose D.J."/>
            <person name="Mau B."/>
            <person name="Zhou S."/>
            <person name="Schwartz D.C."/>
            <person name="Fetherston J.D."/>
            <person name="Lindler L.E."/>
            <person name="Brubaker R.R."/>
            <person name="Plano G.V."/>
            <person name="Straley S.C."/>
            <person name="McDonough K.A."/>
            <person name="Nilles M.L."/>
            <person name="Matson J.S."/>
            <person name="Blattner F.R."/>
            <person name="Perry R.D."/>
        </authorList>
    </citation>
    <scope>NUCLEOTIDE SEQUENCE [LARGE SCALE GENOMIC DNA]</scope>
    <source>
        <strain>KIM10+ / Biovar Mediaevalis</strain>
    </source>
</reference>
<reference key="3">
    <citation type="journal article" date="2004" name="DNA Res.">
        <title>Complete genome sequence of Yersinia pestis strain 91001, an isolate avirulent to humans.</title>
        <authorList>
            <person name="Song Y."/>
            <person name="Tong Z."/>
            <person name="Wang J."/>
            <person name="Wang L."/>
            <person name="Guo Z."/>
            <person name="Han Y."/>
            <person name="Zhang J."/>
            <person name="Pei D."/>
            <person name="Zhou D."/>
            <person name="Qin H."/>
            <person name="Pang X."/>
            <person name="Han Y."/>
            <person name="Zhai J."/>
            <person name="Li M."/>
            <person name="Cui B."/>
            <person name="Qi Z."/>
            <person name="Jin L."/>
            <person name="Dai R."/>
            <person name="Chen F."/>
            <person name="Li S."/>
            <person name="Ye C."/>
            <person name="Du Z."/>
            <person name="Lin W."/>
            <person name="Wang J."/>
            <person name="Yu J."/>
            <person name="Yang H."/>
            <person name="Wang J."/>
            <person name="Huang P."/>
            <person name="Yang R."/>
        </authorList>
    </citation>
    <scope>NUCLEOTIDE SEQUENCE [LARGE SCALE GENOMIC DNA]</scope>
    <source>
        <strain>91001 / Biovar Mediaevalis</strain>
    </source>
</reference>
<feature type="chain" id="PRO_0000094716" description="Holliday junction branch migration complex subunit RuvA">
    <location>
        <begin position="1"/>
        <end position="204"/>
    </location>
</feature>
<feature type="region of interest" description="Domain I" evidence="1">
    <location>
        <begin position="1"/>
        <end position="64"/>
    </location>
</feature>
<feature type="region of interest" description="Domain II" evidence="1">
    <location>
        <begin position="65"/>
        <end position="142"/>
    </location>
</feature>
<feature type="region of interest" description="Flexible linker" evidence="1">
    <location>
        <begin position="143"/>
        <end position="155"/>
    </location>
</feature>
<feature type="region of interest" description="Domain III" evidence="1">
    <location>
        <begin position="156"/>
        <end position="204"/>
    </location>
</feature>
<comment type="function">
    <text evidence="1">The RuvA-RuvB-RuvC complex processes Holliday junction (HJ) DNA during genetic recombination and DNA repair, while the RuvA-RuvB complex plays an important role in the rescue of blocked DNA replication forks via replication fork reversal (RFR). RuvA specifically binds to HJ cruciform DNA, conferring on it an open structure. The RuvB hexamer acts as an ATP-dependent pump, pulling dsDNA into and through the RuvAB complex. HJ branch migration allows RuvC to scan DNA until it finds its consensus sequence, where it cleaves and resolves the cruciform DNA.</text>
</comment>
<comment type="subunit">
    <text evidence="1">Homotetramer. Forms an RuvA(8)-RuvB(12)-Holliday junction (HJ) complex. HJ DNA is sandwiched between 2 RuvA tetramers; dsDNA enters through RuvA and exits via RuvB. An RuvB hexamer assembles on each DNA strand where it exits the tetramer. Each RuvB hexamer is contacted by two RuvA subunits (via domain III) on 2 adjacent RuvB subunits; this complex drives branch migration. In the full resolvosome a probable DNA-RuvA(4)-RuvB(12)-RuvC(2) complex forms which resolves the HJ.</text>
</comment>
<comment type="subcellular location">
    <subcellularLocation>
        <location evidence="1">Cytoplasm</location>
    </subcellularLocation>
</comment>
<comment type="domain">
    <text evidence="1">Has three domains with a flexible linker between the domains II and III and assumes an 'L' shape. Domain III is highly mobile and contacts RuvB.</text>
</comment>
<comment type="similarity">
    <text evidence="1">Belongs to the RuvA family.</text>
</comment>
<comment type="sequence caution" evidence="2">
    <conflict type="erroneous initiation">
        <sequence resource="EMBL-CDS" id="AAM85813"/>
    </conflict>
    <text>Extended N-terminus.</text>
</comment>
<comment type="sequence caution" evidence="2">
    <conflict type="erroneous initiation">
        <sequence resource="EMBL-CDS" id="AAS62118"/>
    </conflict>
    <text>Extended N-terminus.</text>
</comment>
<name>RUVA_YERPE</name>
<keyword id="KW-0963">Cytoplasm</keyword>
<keyword id="KW-0227">DNA damage</keyword>
<keyword id="KW-0233">DNA recombination</keyword>
<keyword id="KW-0234">DNA repair</keyword>
<keyword id="KW-0238">DNA-binding</keyword>
<keyword id="KW-1185">Reference proteome</keyword>
<evidence type="ECO:0000255" key="1">
    <source>
        <dbReference type="HAMAP-Rule" id="MF_00031"/>
    </source>
</evidence>
<evidence type="ECO:0000305" key="2"/>